<reference key="1">
    <citation type="journal article" date="2008" name="Chem. Biol. Interact.">
        <title>Extending the Bacillus cereus group genomics to putative food-borne pathogens of different toxicity.</title>
        <authorList>
            <person name="Lapidus A."/>
            <person name="Goltsman E."/>
            <person name="Auger S."/>
            <person name="Galleron N."/>
            <person name="Segurens B."/>
            <person name="Dossat C."/>
            <person name="Land M.L."/>
            <person name="Broussolle V."/>
            <person name="Brillard J."/>
            <person name="Guinebretiere M.-H."/>
            <person name="Sanchis V."/>
            <person name="Nguen-the C."/>
            <person name="Lereclus D."/>
            <person name="Richardson P."/>
            <person name="Wincker P."/>
            <person name="Weissenbach J."/>
            <person name="Ehrlich S.D."/>
            <person name="Sorokin A."/>
        </authorList>
    </citation>
    <scope>NUCLEOTIDE SEQUENCE [LARGE SCALE GENOMIC DNA]</scope>
    <source>
        <strain>KBAB4</strain>
    </source>
</reference>
<gene>
    <name evidence="1" type="primary">pyrK</name>
    <name type="ordered locus">BcerKBAB4_3712</name>
</gene>
<comment type="function">
    <text evidence="1">Responsible for channeling the electrons from the oxidation of dihydroorotate from the FMN redox center in the PyrD type B subunit to the ultimate electron acceptor NAD(+).</text>
</comment>
<comment type="cofactor">
    <cofactor evidence="1">
        <name>[2Fe-2S] cluster</name>
        <dbReference type="ChEBI" id="CHEBI:190135"/>
    </cofactor>
    <text evidence="1">Binds 1 [2Fe-2S] cluster per subunit.</text>
</comment>
<comment type="cofactor">
    <cofactor evidence="1">
        <name>FAD</name>
        <dbReference type="ChEBI" id="CHEBI:57692"/>
    </cofactor>
    <text evidence="1">Binds 1 FAD per subunit.</text>
</comment>
<comment type="pathway">
    <text evidence="1">Pyrimidine metabolism; UMP biosynthesis via de novo pathway; orotate from (S)-dihydroorotate (NAD(+) route): step 1/1.</text>
</comment>
<comment type="subunit">
    <text evidence="1">Heterotetramer of 2 PyrK and 2 PyrD type B subunits.</text>
</comment>
<comment type="similarity">
    <text evidence="1">Belongs to the PyrK family.</text>
</comment>
<keyword id="KW-0001">2Fe-2S</keyword>
<keyword id="KW-0249">Electron transport</keyword>
<keyword id="KW-0274">FAD</keyword>
<keyword id="KW-0285">Flavoprotein</keyword>
<keyword id="KW-0408">Iron</keyword>
<keyword id="KW-0411">Iron-sulfur</keyword>
<keyword id="KW-0479">Metal-binding</keyword>
<keyword id="KW-0665">Pyrimidine biosynthesis</keyword>
<keyword id="KW-0813">Transport</keyword>
<name>PYRK_BACMK</name>
<sequence>MMQKQNMIVVNQKEIAKNIYELVLQGDLVQQMNDPGQFVHIKVAEGITPLLRRPISICNVDQDKNEFTMLYRAEGQGTKTLAKRKQGELVDVLGPLGHGFPVEEAESGQTALLVGGGIGVPPLYELSQRLVAKGVRVIHILGFQTKDVVFYEEKFAELGDTYVATVDGTHGTKGFVTDVIDSYGIDFDILYSCGPLAMLRALEGRYKERKAYISLEERMGCGIGACFACVCHLQADPSGHSYKKVCSDGPVFPIGEVVL</sequence>
<dbReference type="EMBL" id="CP000903">
    <property type="protein sequence ID" value="ABY44881.1"/>
    <property type="molecule type" value="Genomic_DNA"/>
</dbReference>
<dbReference type="RefSeq" id="WP_002088239.1">
    <property type="nucleotide sequence ID" value="NC_010184.1"/>
</dbReference>
<dbReference type="SMR" id="A9VTC5"/>
<dbReference type="GeneID" id="66266548"/>
<dbReference type="KEGG" id="bwe:BcerKBAB4_3712"/>
<dbReference type="eggNOG" id="COG0543">
    <property type="taxonomic scope" value="Bacteria"/>
</dbReference>
<dbReference type="HOGENOM" id="CLU_003827_1_2_9"/>
<dbReference type="UniPathway" id="UPA00070">
    <property type="reaction ID" value="UER00945"/>
</dbReference>
<dbReference type="Proteomes" id="UP000002154">
    <property type="component" value="Chromosome"/>
</dbReference>
<dbReference type="GO" id="GO:0051537">
    <property type="term" value="F:2 iron, 2 sulfur cluster binding"/>
    <property type="evidence" value="ECO:0007669"/>
    <property type="project" value="UniProtKB-KW"/>
</dbReference>
<dbReference type="GO" id="GO:0009055">
    <property type="term" value="F:electron transfer activity"/>
    <property type="evidence" value="ECO:0007669"/>
    <property type="project" value="UniProtKB-UniRule"/>
</dbReference>
<dbReference type="GO" id="GO:0050660">
    <property type="term" value="F:flavin adenine dinucleotide binding"/>
    <property type="evidence" value="ECO:0007669"/>
    <property type="project" value="InterPro"/>
</dbReference>
<dbReference type="GO" id="GO:0046872">
    <property type="term" value="F:metal ion binding"/>
    <property type="evidence" value="ECO:0007669"/>
    <property type="project" value="UniProtKB-KW"/>
</dbReference>
<dbReference type="GO" id="GO:0016491">
    <property type="term" value="F:oxidoreductase activity"/>
    <property type="evidence" value="ECO:0007669"/>
    <property type="project" value="InterPro"/>
</dbReference>
<dbReference type="GO" id="GO:0044205">
    <property type="term" value="P:'de novo' UMP biosynthetic process"/>
    <property type="evidence" value="ECO:0007669"/>
    <property type="project" value="UniProtKB-UniRule"/>
</dbReference>
<dbReference type="CDD" id="cd06218">
    <property type="entry name" value="DHOD_e_trans"/>
    <property type="match status" value="1"/>
</dbReference>
<dbReference type="FunFam" id="2.10.240.10:FF:000001">
    <property type="entry name" value="Dihydroorotate dehydrogenase B (NAD(+)), electron transfer subunit"/>
    <property type="match status" value="1"/>
</dbReference>
<dbReference type="FunFam" id="2.40.30.10:FF:000045">
    <property type="entry name" value="Dihydroorotate dehydrogenase B (NAD(+)), electron transfer subunit"/>
    <property type="match status" value="1"/>
</dbReference>
<dbReference type="FunFam" id="3.40.50.80:FF:000017">
    <property type="entry name" value="Dihydroorotate dehydrogenase B (NAD(+)), electron transfer subunit"/>
    <property type="match status" value="1"/>
</dbReference>
<dbReference type="Gene3D" id="2.10.240.10">
    <property type="entry name" value="Dihydroorotate dehydrogenase, electron transfer subunit"/>
    <property type="match status" value="1"/>
</dbReference>
<dbReference type="Gene3D" id="3.40.50.80">
    <property type="entry name" value="Nucleotide-binding domain of ferredoxin-NADP reductase (FNR) module"/>
    <property type="match status" value="1"/>
</dbReference>
<dbReference type="Gene3D" id="2.40.30.10">
    <property type="entry name" value="Translation factors"/>
    <property type="match status" value="1"/>
</dbReference>
<dbReference type="HAMAP" id="MF_01211">
    <property type="entry name" value="DHODB_Fe_S_bind"/>
    <property type="match status" value="1"/>
</dbReference>
<dbReference type="InterPro" id="IPR008333">
    <property type="entry name" value="Cbr1-like_FAD-bd_dom"/>
</dbReference>
<dbReference type="InterPro" id="IPR012165">
    <property type="entry name" value="Cyt_c3_hydrogenase_gsu"/>
</dbReference>
<dbReference type="InterPro" id="IPR037117">
    <property type="entry name" value="Dihydroorotate_DH_ele_sf"/>
</dbReference>
<dbReference type="InterPro" id="IPR019480">
    <property type="entry name" value="Dihydroorotate_DH_Fe-S-bd"/>
</dbReference>
<dbReference type="InterPro" id="IPR023455">
    <property type="entry name" value="Dihydroorotate_DHASE_ETsu"/>
</dbReference>
<dbReference type="InterPro" id="IPR017927">
    <property type="entry name" value="FAD-bd_FR_type"/>
</dbReference>
<dbReference type="InterPro" id="IPR039261">
    <property type="entry name" value="FNR_nucleotide-bd"/>
</dbReference>
<dbReference type="InterPro" id="IPR001433">
    <property type="entry name" value="OxRdtase_FAD/NAD-bd"/>
</dbReference>
<dbReference type="InterPro" id="IPR050353">
    <property type="entry name" value="PyrK_electron_transfer"/>
</dbReference>
<dbReference type="InterPro" id="IPR017938">
    <property type="entry name" value="Riboflavin_synthase-like_b-brl"/>
</dbReference>
<dbReference type="NCBIfam" id="NF000797">
    <property type="entry name" value="PRK00054.1-2"/>
    <property type="match status" value="1"/>
</dbReference>
<dbReference type="NCBIfam" id="NF000799">
    <property type="entry name" value="PRK00054.1-4"/>
    <property type="match status" value="1"/>
</dbReference>
<dbReference type="PANTHER" id="PTHR43513">
    <property type="entry name" value="DIHYDROOROTATE DEHYDROGENASE B (NAD(+)), ELECTRON TRANSFER SUBUNIT"/>
    <property type="match status" value="1"/>
</dbReference>
<dbReference type="PANTHER" id="PTHR43513:SF3">
    <property type="entry name" value="DIHYDROOROTATE DEHYDROGENASE B (NAD(+)), ELECTRON TRANSFER SUBUNIT-RELATED"/>
    <property type="match status" value="1"/>
</dbReference>
<dbReference type="Pfam" id="PF10418">
    <property type="entry name" value="DHODB_Fe-S_bind"/>
    <property type="match status" value="1"/>
</dbReference>
<dbReference type="Pfam" id="PF00970">
    <property type="entry name" value="FAD_binding_6"/>
    <property type="match status" value="1"/>
</dbReference>
<dbReference type="Pfam" id="PF00175">
    <property type="entry name" value="NAD_binding_1"/>
    <property type="match status" value="1"/>
</dbReference>
<dbReference type="PIRSF" id="PIRSF006816">
    <property type="entry name" value="Cyc3_hyd_g"/>
    <property type="match status" value="1"/>
</dbReference>
<dbReference type="PRINTS" id="PR00409">
    <property type="entry name" value="PHDIOXRDTASE"/>
</dbReference>
<dbReference type="SUPFAM" id="SSF52343">
    <property type="entry name" value="Ferredoxin reductase-like, C-terminal NADP-linked domain"/>
    <property type="match status" value="1"/>
</dbReference>
<dbReference type="SUPFAM" id="SSF63380">
    <property type="entry name" value="Riboflavin synthase domain-like"/>
    <property type="match status" value="1"/>
</dbReference>
<dbReference type="PROSITE" id="PS51384">
    <property type="entry name" value="FAD_FR"/>
    <property type="match status" value="1"/>
</dbReference>
<feature type="chain" id="PRO_1000138910" description="Dihydroorotate dehydrogenase B (NAD(+)), electron transfer subunit">
    <location>
        <begin position="1"/>
        <end position="259"/>
    </location>
</feature>
<feature type="domain" description="FAD-binding FR-type" evidence="1">
    <location>
        <begin position="2"/>
        <end position="102"/>
    </location>
</feature>
<feature type="binding site" evidence="1">
    <location>
        <begin position="53"/>
        <end position="56"/>
    </location>
    <ligand>
        <name>FAD</name>
        <dbReference type="ChEBI" id="CHEBI:57692"/>
    </ligand>
</feature>
<feature type="binding site" evidence="1">
    <location>
        <begin position="70"/>
        <end position="72"/>
    </location>
    <ligand>
        <name>FAD</name>
        <dbReference type="ChEBI" id="CHEBI:57692"/>
    </ligand>
</feature>
<feature type="binding site" evidence="1">
    <location>
        <begin position="77"/>
        <end position="78"/>
    </location>
    <ligand>
        <name>FAD</name>
        <dbReference type="ChEBI" id="CHEBI:57692"/>
    </ligand>
</feature>
<feature type="binding site" evidence="1">
    <location>
        <position position="221"/>
    </location>
    <ligand>
        <name>[2Fe-2S] cluster</name>
        <dbReference type="ChEBI" id="CHEBI:190135"/>
    </ligand>
</feature>
<feature type="binding site" evidence="1">
    <location>
        <position position="226"/>
    </location>
    <ligand>
        <name>[2Fe-2S] cluster</name>
        <dbReference type="ChEBI" id="CHEBI:190135"/>
    </ligand>
</feature>
<feature type="binding site" evidence="1">
    <location>
        <position position="229"/>
    </location>
    <ligand>
        <name>[2Fe-2S] cluster</name>
        <dbReference type="ChEBI" id="CHEBI:190135"/>
    </ligand>
</feature>
<feature type="binding site" evidence="1">
    <location>
        <position position="246"/>
    </location>
    <ligand>
        <name>[2Fe-2S] cluster</name>
        <dbReference type="ChEBI" id="CHEBI:190135"/>
    </ligand>
</feature>
<proteinExistence type="inferred from homology"/>
<evidence type="ECO:0000255" key="1">
    <source>
        <dbReference type="HAMAP-Rule" id="MF_01211"/>
    </source>
</evidence>
<accession>A9VTC5</accession>
<protein>
    <recommendedName>
        <fullName evidence="1">Dihydroorotate dehydrogenase B (NAD(+)), electron transfer subunit</fullName>
    </recommendedName>
    <alternativeName>
        <fullName evidence="1">Dihydroorotate oxidase B, electron transfer subunit</fullName>
    </alternativeName>
</protein>
<organism>
    <name type="scientific">Bacillus mycoides (strain KBAB4)</name>
    <name type="common">Bacillus weihenstephanensis</name>
    <dbReference type="NCBI Taxonomy" id="315730"/>
    <lineage>
        <taxon>Bacteria</taxon>
        <taxon>Bacillati</taxon>
        <taxon>Bacillota</taxon>
        <taxon>Bacilli</taxon>
        <taxon>Bacillales</taxon>
        <taxon>Bacillaceae</taxon>
        <taxon>Bacillus</taxon>
        <taxon>Bacillus cereus group</taxon>
    </lineage>
</organism>